<comment type="function">
    <text evidence="1">Catalyzes the transfer of the enolpyruvyl moiety of phosphoenolpyruvate (PEP) to the 5-hydroxyl of shikimate-3-phosphate (S3P) to produce enolpyruvyl shikimate-3-phosphate and inorganic phosphate.</text>
</comment>
<comment type="catalytic activity">
    <reaction evidence="1">
        <text>3-phosphoshikimate + phosphoenolpyruvate = 5-O-(1-carboxyvinyl)-3-phosphoshikimate + phosphate</text>
        <dbReference type="Rhea" id="RHEA:21256"/>
        <dbReference type="ChEBI" id="CHEBI:43474"/>
        <dbReference type="ChEBI" id="CHEBI:57701"/>
        <dbReference type="ChEBI" id="CHEBI:58702"/>
        <dbReference type="ChEBI" id="CHEBI:145989"/>
        <dbReference type="EC" id="2.5.1.19"/>
    </reaction>
    <physiologicalReaction direction="left-to-right" evidence="1">
        <dbReference type="Rhea" id="RHEA:21257"/>
    </physiologicalReaction>
</comment>
<comment type="pathway">
    <text evidence="1">Metabolic intermediate biosynthesis; chorismate biosynthesis; chorismate from D-erythrose 4-phosphate and phosphoenolpyruvate: step 6/7.</text>
</comment>
<comment type="subunit">
    <text evidence="1">Monomer.</text>
</comment>
<comment type="subcellular location">
    <subcellularLocation>
        <location evidence="1">Cytoplasm</location>
    </subcellularLocation>
</comment>
<comment type="similarity">
    <text evidence="1">Belongs to the EPSP synthase family.</text>
</comment>
<organism>
    <name type="scientific">Sinorhizobium fredii (strain NBRC 101917 / NGR234)</name>
    <dbReference type="NCBI Taxonomy" id="394"/>
    <lineage>
        <taxon>Bacteria</taxon>
        <taxon>Pseudomonadati</taxon>
        <taxon>Pseudomonadota</taxon>
        <taxon>Alphaproteobacteria</taxon>
        <taxon>Hyphomicrobiales</taxon>
        <taxon>Rhizobiaceae</taxon>
        <taxon>Sinorhizobium/Ensifer group</taxon>
        <taxon>Sinorhizobium</taxon>
    </lineage>
</organism>
<evidence type="ECO:0000255" key="1">
    <source>
        <dbReference type="HAMAP-Rule" id="MF_00210"/>
    </source>
</evidence>
<dbReference type="EC" id="2.5.1.19" evidence="1"/>
<dbReference type="EMBL" id="CP001389">
    <property type="protein sequence ID" value="ACP27305.1"/>
    <property type="molecule type" value="Genomic_DNA"/>
</dbReference>
<dbReference type="RefSeq" id="WP_012710050.1">
    <property type="nucleotide sequence ID" value="NC_012587.1"/>
</dbReference>
<dbReference type="RefSeq" id="YP_002828058.1">
    <property type="nucleotide sequence ID" value="NC_012587.1"/>
</dbReference>
<dbReference type="SMR" id="C3MC80"/>
<dbReference type="STRING" id="394.NGR_c35830"/>
<dbReference type="KEGG" id="rhi:NGR_c35830"/>
<dbReference type="PATRIC" id="fig|394.7.peg.6435"/>
<dbReference type="eggNOG" id="COG0128">
    <property type="taxonomic scope" value="Bacteria"/>
</dbReference>
<dbReference type="HOGENOM" id="CLU_024321_0_1_5"/>
<dbReference type="OrthoDB" id="9809920at2"/>
<dbReference type="BRENDA" id="2.5.1.19">
    <property type="organism ID" value="5341"/>
</dbReference>
<dbReference type="UniPathway" id="UPA00053">
    <property type="reaction ID" value="UER00089"/>
</dbReference>
<dbReference type="Proteomes" id="UP000001054">
    <property type="component" value="Chromosome"/>
</dbReference>
<dbReference type="GO" id="GO:0005737">
    <property type="term" value="C:cytoplasm"/>
    <property type="evidence" value="ECO:0007669"/>
    <property type="project" value="UniProtKB-SubCell"/>
</dbReference>
<dbReference type="GO" id="GO:0003866">
    <property type="term" value="F:3-phosphoshikimate 1-carboxyvinyltransferase activity"/>
    <property type="evidence" value="ECO:0007669"/>
    <property type="project" value="UniProtKB-UniRule"/>
</dbReference>
<dbReference type="GO" id="GO:0008652">
    <property type="term" value="P:amino acid biosynthetic process"/>
    <property type="evidence" value="ECO:0007669"/>
    <property type="project" value="UniProtKB-KW"/>
</dbReference>
<dbReference type="GO" id="GO:0009073">
    <property type="term" value="P:aromatic amino acid family biosynthetic process"/>
    <property type="evidence" value="ECO:0007669"/>
    <property type="project" value="UniProtKB-KW"/>
</dbReference>
<dbReference type="GO" id="GO:0009423">
    <property type="term" value="P:chorismate biosynthetic process"/>
    <property type="evidence" value="ECO:0007669"/>
    <property type="project" value="UniProtKB-UniRule"/>
</dbReference>
<dbReference type="CDD" id="cd01556">
    <property type="entry name" value="EPSP_synthase"/>
    <property type="match status" value="1"/>
</dbReference>
<dbReference type="FunFam" id="3.65.10.10:FF:000005">
    <property type="entry name" value="3-phosphoshikimate 1-carboxyvinyltransferase"/>
    <property type="match status" value="1"/>
</dbReference>
<dbReference type="FunFam" id="3.65.10.10:FF:000006">
    <property type="entry name" value="3-phosphoshikimate 1-carboxyvinyltransferase"/>
    <property type="match status" value="1"/>
</dbReference>
<dbReference type="Gene3D" id="3.65.10.10">
    <property type="entry name" value="Enolpyruvate transferase domain"/>
    <property type="match status" value="2"/>
</dbReference>
<dbReference type="HAMAP" id="MF_00210">
    <property type="entry name" value="EPSP_synth"/>
    <property type="match status" value="1"/>
</dbReference>
<dbReference type="InterPro" id="IPR001986">
    <property type="entry name" value="Enolpyruvate_Tfrase_dom"/>
</dbReference>
<dbReference type="InterPro" id="IPR036968">
    <property type="entry name" value="Enolpyruvate_Tfrase_sf"/>
</dbReference>
<dbReference type="InterPro" id="IPR006264">
    <property type="entry name" value="EPSP_synthase"/>
</dbReference>
<dbReference type="InterPro" id="IPR023193">
    <property type="entry name" value="EPSP_synthase_CS"/>
</dbReference>
<dbReference type="InterPro" id="IPR013792">
    <property type="entry name" value="RNA3'P_cycl/enolpyr_Trfase_a/b"/>
</dbReference>
<dbReference type="NCBIfam" id="TIGR01356">
    <property type="entry name" value="aroA"/>
    <property type="match status" value="1"/>
</dbReference>
<dbReference type="PANTHER" id="PTHR21090">
    <property type="entry name" value="AROM/DEHYDROQUINATE SYNTHASE"/>
    <property type="match status" value="1"/>
</dbReference>
<dbReference type="PANTHER" id="PTHR21090:SF5">
    <property type="entry name" value="PENTAFUNCTIONAL AROM POLYPEPTIDE"/>
    <property type="match status" value="1"/>
</dbReference>
<dbReference type="Pfam" id="PF00275">
    <property type="entry name" value="EPSP_synthase"/>
    <property type="match status" value="1"/>
</dbReference>
<dbReference type="PIRSF" id="PIRSF000505">
    <property type="entry name" value="EPSPS"/>
    <property type="match status" value="1"/>
</dbReference>
<dbReference type="SUPFAM" id="SSF55205">
    <property type="entry name" value="EPT/RTPC-like"/>
    <property type="match status" value="1"/>
</dbReference>
<dbReference type="PROSITE" id="PS00104">
    <property type="entry name" value="EPSP_SYNTHASE_1"/>
    <property type="match status" value="1"/>
</dbReference>
<dbReference type="PROSITE" id="PS00885">
    <property type="entry name" value="EPSP_SYNTHASE_2"/>
    <property type="match status" value="1"/>
</dbReference>
<reference key="1">
    <citation type="journal article" date="2009" name="Appl. Environ. Microbiol.">
        <title>Rhizobium sp. strain NGR234 possesses a remarkable number of secretion systems.</title>
        <authorList>
            <person name="Schmeisser C."/>
            <person name="Liesegang H."/>
            <person name="Krysciak D."/>
            <person name="Bakkou N."/>
            <person name="Le Quere A."/>
            <person name="Wollherr A."/>
            <person name="Heinemeyer I."/>
            <person name="Morgenstern B."/>
            <person name="Pommerening-Roeser A."/>
            <person name="Flores M."/>
            <person name="Palacios R."/>
            <person name="Brenner S."/>
            <person name="Gottschalk G."/>
            <person name="Schmitz R.A."/>
            <person name="Broughton W.J."/>
            <person name="Perret X."/>
            <person name="Strittmatter A.W."/>
            <person name="Streit W.R."/>
        </authorList>
    </citation>
    <scope>NUCLEOTIDE SEQUENCE [LARGE SCALE GENOMIC DNA]</scope>
    <source>
        <strain>NBRC 101917 / NGR234</strain>
    </source>
</reference>
<accession>C3MC80</accession>
<name>AROA_SINFN</name>
<keyword id="KW-0028">Amino-acid biosynthesis</keyword>
<keyword id="KW-0057">Aromatic amino acid biosynthesis</keyword>
<keyword id="KW-0963">Cytoplasm</keyword>
<keyword id="KW-1185">Reference proteome</keyword>
<keyword id="KW-0808">Transferase</keyword>
<gene>
    <name evidence="1" type="primary">aroA</name>
    <name type="ordered locus">NGR_c35830</name>
</gene>
<sequence>MSHGLSPRPATAKKSADLKGTVRIPGDKSISHRSFMFGGLASGETRITGLLEGEDVINTGKAMQAMGAKIRKEGDTWIINGVGNGALLAPEAPLDFGNAGTGCRLTMGLVGVYDFDSTFIGDASLTKRPMGRVLDPLREMGVQVKSAEGDRLPVTLRGPKTPNPITYRVPMASAQVKSAVLLAGLNTPGITTVIEPVMTRDHTEKMLQGFGANLSVETDTAGVRTIRLEGRGKLTGQVIDVPGDPSSTAFPLVAALLVPGSDVTILNVLMNPTRTGLILTLQEMGANIEVMNPRLAGGEDVADLRVRYSELKGVTVPEERAPSMIDEYPVLAVAAAFAEGATVMNGLDELRVKESDRLSAVADGLKLNGVDCDEGEASLVVRGRPGGKGLGNAAGGQVKTHLDHRIAMSFLVLGLASEHPVTVDDATMIATSFPEFMDLMTGLGATIE</sequence>
<proteinExistence type="inferred from homology"/>
<protein>
    <recommendedName>
        <fullName evidence="1">3-phosphoshikimate 1-carboxyvinyltransferase</fullName>
        <ecNumber evidence="1">2.5.1.19</ecNumber>
    </recommendedName>
    <alternativeName>
        <fullName evidence="1">5-enolpyruvylshikimate-3-phosphate synthase</fullName>
        <shortName evidence="1">EPSP synthase</shortName>
        <shortName evidence="1">EPSPS</shortName>
    </alternativeName>
</protein>
<feature type="chain" id="PRO_1000124702" description="3-phosphoshikimate 1-carboxyvinyltransferase">
    <location>
        <begin position="1"/>
        <end position="448"/>
    </location>
</feature>
<feature type="active site" description="Proton acceptor" evidence="1">
    <location>
        <position position="326"/>
    </location>
</feature>
<feature type="binding site" evidence="1">
    <location>
        <position position="28"/>
    </location>
    <ligand>
        <name>3-phosphoshikimate</name>
        <dbReference type="ChEBI" id="CHEBI:145989"/>
    </ligand>
</feature>
<feature type="binding site" evidence="1">
    <location>
        <position position="28"/>
    </location>
    <ligand>
        <name>phosphoenolpyruvate</name>
        <dbReference type="ChEBI" id="CHEBI:58702"/>
    </ligand>
</feature>
<feature type="binding site" evidence="1">
    <location>
        <position position="29"/>
    </location>
    <ligand>
        <name>3-phosphoshikimate</name>
        <dbReference type="ChEBI" id="CHEBI:145989"/>
    </ligand>
</feature>
<feature type="binding site" evidence="1">
    <location>
        <position position="33"/>
    </location>
    <ligand>
        <name>3-phosphoshikimate</name>
        <dbReference type="ChEBI" id="CHEBI:145989"/>
    </ligand>
</feature>
<feature type="binding site" evidence="1">
    <location>
        <position position="100"/>
    </location>
    <ligand>
        <name>phosphoenolpyruvate</name>
        <dbReference type="ChEBI" id="CHEBI:58702"/>
    </ligand>
</feature>
<feature type="binding site" evidence="1">
    <location>
        <position position="128"/>
    </location>
    <ligand>
        <name>phosphoenolpyruvate</name>
        <dbReference type="ChEBI" id="CHEBI:58702"/>
    </ligand>
</feature>
<feature type="binding site" evidence="1">
    <location>
        <position position="173"/>
    </location>
    <ligand>
        <name>3-phosphoshikimate</name>
        <dbReference type="ChEBI" id="CHEBI:145989"/>
    </ligand>
</feature>
<feature type="binding site" evidence="1">
    <location>
        <position position="175"/>
    </location>
    <ligand>
        <name>3-phosphoshikimate</name>
        <dbReference type="ChEBI" id="CHEBI:145989"/>
    </ligand>
</feature>
<feature type="binding site" evidence="1">
    <location>
        <position position="175"/>
    </location>
    <ligand>
        <name>phosphoenolpyruvate</name>
        <dbReference type="ChEBI" id="CHEBI:58702"/>
    </ligand>
</feature>
<feature type="binding site" evidence="1">
    <location>
        <position position="326"/>
    </location>
    <ligand>
        <name>3-phosphoshikimate</name>
        <dbReference type="ChEBI" id="CHEBI:145989"/>
    </ligand>
</feature>
<feature type="binding site" evidence="1">
    <location>
        <position position="353"/>
    </location>
    <ligand>
        <name>3-phosphoshikimate</name>
        <dbReference type="ChEBI" id="CHEBI:145989"/>
    </ligand>
</feature>
<feature type="binding site" evidence="1">
    <location>
        <position position="357"/>
    </location>
    <ligand>
        <name>phosphoenolpyruvate</name>
        <dbReference type="ChEBI" id="CHEBI:58702"/>
    </ligand>
</feature>
<feature type="binding site" evidence="1">
    <location>
        <position position="405"/>
    </location>
    <ligand>
        <name>phosphoenolpyruvate</name>
        <dbReference type="ChEBI" id="CHEBI:58702"/>
    </ligand>
</feature>